<comment type="function">
    <text evidence="1">Plays critical roles in virus replication, from virus entry and uncoating to assembly and budding of the virus particle. M1 binding to ribonucleocapsids (RNPs) in nucleus seems to inhibit viral transcription. Interaction of viral NEP with M1-RNP is thought to promote nuclear export of the complex, which is targeted to the virion assembly site at the apical plasma membrane in polarized epithelial cells. Interactions with NA and HA may bring M1, a non-raft-associated protein, into lipid rafts. Forms a continuous shell on the inner side of the lipid bilayer in virion, where it binds the RNP. During virus entry into cell, the M2 ion channel acidifies the internal virion core, inducing M1 dissociation from the RNP. M1-free RNPs are transported to the nucleus, where viral transcription and replication can take place.</text>
</comment>
<comment type="function">
    <text evidence="1">Determines the virion's shape: spherical or filamentous. Clinical isolates of influenza are characterized by the presence of significant proportion of filamentous virions, whereas after multiple passage on eggs or cell culture, virions have only spherical morphology. Filamentous virions are thought to be important to infect neighboring cells, and spherical virions more suited to spread through aerosol between hosts organisms.</text>
</comment>
<comment type="subunit">
    <text evidence="1">Homodimer and homomultimer. Interacts with NEP. Binds ribonucleocapsid by both interacting with genomic RNA and NP protein. May interact with HA and NA. Cannot bind NP without genomic RNA.</text>
</comment>
<comment type="subcellular location">
    <subcellularLocation>
        <location evidence="1">Virion membrane</location>
        <topology evidence="1">Peripheral membrane protein</topology>
        <orientation evidence="1">Cytoplasmic side</orientation>
    </subcellularLocation>
    <subcellularLocation>
        <location evidence="1">Host nucleus</location>
    </subcellularLocation>
</comment>
<comment type="alternative products">
    <event type="alternative splicing"/>
    <isoform>
        <id>Q463X3-1</id>
        <name>M1</name>
        <sequence type="displayed"/>
    </isoform>
    <isoform>
        <id>Q463X4-1</id>
        <name>M2</name>
        <sequence type="external"/>
    </isoform>
    <text>Only the first 9 residues are shared by the 2 isoforms.</text>
</comment>
<comment type="miscellaneous">
    <text evidence="1">Most abundant protein in virion. When expressed alone can form virus-like particles in transfected cells.</text>
</comment>
<comment type="similarity">
    <text evidence="1">Belongs to the influenza viruses Matrix protein M1 family.</text>
</comment>
<reference key="1">
    <citation type="submission" date="2005-08" db="EMBL/GenBank/DDBJ databases">
        <title>The NIAID influenza genome sequencing project.</title>
        <authorList>
            <person name="Ghedin E."/>
            <person name="Spiro D."/>
            <person name="Miller N."/>
            <person name="Zaborsky J."/>
            <person name="Feldblyum T."/>
            <person name="Subbu V."/>
            <person name="Shumway M."/>
            <person name="Sparenborg J."/>
            <person name="Groveman L."/>
            <person name="Halpin R."/>
            <person name="Sitz J."/>
            <person name="Koo H."/>
            <person name="Salzberg S.L."/>
            <person name="Webster R.G."/>
            <person name="Hoffmann E."/>
            <person name="Krauss S."/>
            <person name="Naeve C."/>
            <person name="Bao Y."/>
            <person name="Bolotov P."/>
            <person name="Dernovoy D."/>
            <person name="Kiryutin B."/>
            <person name="Lipman D.J."/>
            <person name="Tatusova T."/>
        </authorList>
    </citation>
    <scope>NUCLEOTIDE SEQUENCE [GENOMIC RNA]</scope>
</reference>
<feature type="chain" id="PRO_0000326294" description="Matrix protein 1">
    <location>
        <begin position="1"/>
        <end position="252"/>
    </location>
</feature>
<feature type="region of interest" description="Membrane-binding" evidence="1">
    <location>
        <begin position="1"/>
        <end position="164"/>
    </location>
</feature>
<feature type="region of interest" description="RNP-binding" evidence="1">
    <location>
        <begin position="165"/>
        <end position="252"/>
    </location>
</feature>
<feature type="short sequence motif" description="Nuclear localization signal" evidence="1">
    <location>
        <begin position="101"/>
        <end position="105"/>
    </location>
</feature>
<name>M1_I72A3</name>
<organism>
    <name type="scientific">Influenza A virus (strain A/Memphis/102/1972 H3N2)</name>
    <dbReference type="NCBI Taxonomy" id="385640"/>
    <lineage>
        <taxon>Viruses</taxon>
        <taxon>Riboviria</taxon>
        <taxon>Orthornavirae</taxon>
        <taxon>Negarnaviricota</taxon>
        <taxon>Polyploviricotina</taxon>
        <taxon>Insthoviricetes</taxon>
        <taxon>Articulavirales</taxon>
        <taxon>Orthomyxoviridae</taxon>
        <taxon>Alphainfluenzavirus</taxon>
        <taxon>Alphainfluenzavirus influenzae</taxon>
        <taxon>Influenza A virus</taxon>
    </lineage>
</organism>
<proteinExistence type="inferred from homology"/>
<keyword id="KW-0025">Alternative splicing</keyword>
<keyword id="KW-1048">Host nucleus</keyword>
<keyword id="KW-0472">Membrane</keyword>
<keyword id="KW-0694">RNA-binding</keyword>
<keyword id="KW-0468">Viral matrix protein</keyword>
<keyword id="KW-0946">Virion</keyword>
<sequence length="252" mass="27804">MSLLTEVETYVLSIVPSGPLKAEIAQRLEDVFAGKNTDLEALMEWLKTRPILSPLTKGILGFVFTLTVPSERGLQRRRFVQNALNGNGDPNNMDRAVKLYRKLKREITFHGAKEIALSYSAGALASCMGLIYNRMGAVTTEVAFGLVCATCEQIADSQHRSHRQMVATTNPLIRHENRMVLASTTAKAMEQMAGSSEQAAEAMEVASQARQMVQAMRAIGTHPSSSAGLKDDLLENLQAYQKRMGVQMQRFK</sequence>
<evidence type="ECO:0000255" key="1">
    <source>
        <dbReference type="HAMAP-Rule" id="MF_04068"/>
    </source>
</evidence>
<accession>Q463X3</accession>
<gene>
    <name evidence="1" type="primary">M</name>
</gene>
<dbReference type="EMBL" id="CY002097">
    <property type="protein sequence ID" value="AAZ43384.1"/>
    <property type="molecule type" value="Genomic_RNA"/>
</dbReference>
<dbReference type="SMR" id="Q463X3"/>
<dbReference type="Proteomes" id="UP000118421">
    <property type="component" value="Genome"/>
</dbReference>
<dbReference type="GO" id="GO:0042025">
    <property type="term" value="C:host cell nucleus"/>
    <property type="evidence" value="ECO:0007669"/>
    <property type="project" value="UniProtKB-SubCell"/>
</dbReference>
<dbReference type="GO" id="GO:0016020">
    <property type="term" value="C:membrane"/>
    <property type="evidence" value="ECO:0007669"/>
    <property type="project" value="UniProtKB-KW"/>
</dbReference>
<dbReference type="GO" id="GO:0055036">
    <property type="term" value="C:virion membrane"/>
    <property type="evidence" value="ECO:0007669"/>
    <property type="project" value="UniProtKB-SubCell"/>
</dbReference>
<dbReference type="GO" id="GO:0003723">
    <property type="term" value="F:RNA binding"/>
    <property type="evidence" value="ECO:0007669"/>
    <property type="project" value="UniProtKB-UniRule"/>
</dbReference>
<dbReference type="GO" id="GO:0039660">
    <property type="term" value="F:structural constituent of virion"/>
    <property type="evidence" value="ECO:0007669"/>
    <property type="project" value="UniProtKB-UniRule"/>
</dbReference>
<dbReference type="GO" id="GO:0046761">
    <property type="term" value="P:viral budding from plasma membrane"/>
    <property type="evidence" value="ECO:0007669"/>
    <property type="project" value="UniProtKB-UniRule"/>
</dbReference>
<dbReference type="FunFam" id="1.10.10.180:FF:000001">
    <property type="entry name" value="Matrix protein 1"/>
    <property type="match status" value="1"/>
</dbReference>
<dbReference type="FunFam" id="1.20.91.10:FF:000001">
    <property type="entry name" value="Matrix protein 1"/>
    <property type="match status" value="1"/>
</dbReference>
<dbReference type="Gene3D" id="1.10.10.180">
    <property type="match status" value="1"/>
</dbReference>
<dbReference type="Gene3D" id="1.20.91.10">
    <property type="match status" value="1"/>
</dbReference>
<dbReference type="HAMAP" id="MF_04068">
    <property type="entry name" value="INFV_M1"/>
    <property type="match status" value="1"/>
</dbReference>
<dbReference type="InterPro" id="IPR036039">
    <property type="entry name" value="Flu_matrix_M1"/>
</dbReference>
<dbReference type="InterPro" id="IPR013188">
    <property type="entry name" value="Flu_matrix_M1_C"/>
</dbReference>
<dbReference type="InterPro" id="IPR001561">
    <property type="entry name" value="Flu_matrix_M1_N"/>
</dbReference>
<dbReference type="InterPro" id="IPR015423">
    <property type="entry name" value="Flu_matrix_M1_N_sub1"/>
</dbReference>
<dbReference type="InterPro" id="IPR015799">
    <property type="entry name" value="Flu_matrix_M1_N_sub2"/>
</dbReference>
<dbReference type="InterPro" id="IPR037533">
    <property type="entry name" value="INFV_M1"/>
</dbReference>
<dbReference type="Pfam" id="PF00598">
    <property type="entry name" value="Flu_M1"/>
    <property type="match status" value="1"/>
</dbReference>
<dbReference type="Pfam" id="PF08289">
    <property type="entry name" value="Flu_M1_C"/>
    <property type="match status" value="1"/>
</dbReference>
<dbReference type="SMART" id="SM00759">
    <property type="entry name" value="Flu_M1_C"/>
    <property type="match status" value="1"/>
</dbReference>
<dbReference type="SUPFAM" id="SSF48145">
    <property type="entry name" value="Influenza virus matrix protein M1"/>
    <property type="match status" value="1"/>
</dbReference>
<protein>
    <recommendedName>
        <fullName evidence="1">Matrix protein 1</fullName>
        <shortName evidence="1">M1</shortName>
    </recommendedName>
</protein>
<organismHost>
    <name type="scientific">Aves</name>
    <dbReference type="NCBI Taxonomy" id="8782"/>
</organismHost>
<organismHost>
    <name type="scientific">Cetacea</name>
    <name type="common">whales</name>
    <dbReference type="NCBI Taxonomy" id="9721"/>
</organismHost>
<organismHost>
    <name type="scientific">Homo sapiens</name>
    <name type="common">Human</name>
    <dbReference type="NCBI Taxonomy" id="9606"/>
</organismHost>
<organismHost>
    <name type="scientific">Phocidae</name>
    <name type="common">true seals</name>
    <dbReference type="NCBI Taxonomy" id="9709"/>
</organismHost>
<organismHost>
    <name type="scientific">Sus scrofa</name>
    <name type="common">Pig</name>
    <dbReference type="NCBI Taxonomy" id="9823"/>
</organismHost>